<accession>Q6BIR9</accession>
<dbReference type="EMBL" id="CR382139">
    <property type="protein sequence ID" value="CAG90365.1"/>
    <property type="molecule type" value="Genomic_DNA"/>
</dbReference>
<dbReference type="RefSeq" id="XP_461902.1">
    <property type="nucleotide sequence ID" value="XM_461902.1"/>
</dbReference>
<dbReference type="SMR" id="Q6BIR9"/>
<dbReference type="FunCoup" id="Q6BIR9">
    <property type="interactions" value="76"/>
</dbReference>
<dbReference type="STRING" id="284592.Q6BIR9"/>
<dbReference type="GeneID" id="2904783"/>
<dbReference type="KEGG" id="dha:DEHA2G08140g"/>
<dbReference type="VEuPathDB" id="FungiDB:DEHA2G08140g"/>
<dbReference type="eggNOG" id="KOG0645">
    <property type="taxonomic scope" value="Eukaryota"/>
</dbReference>
<dbReference type="HOGENOM" id="CLU_000288_57_8_1"/>
<dbReference type="InParanoid" id="Q6BIR9"/>
<dbReference type="OMA" id="IREIRWS"/>
<dbReference type="OrthoDB" id="284782at2759"/>
<dbReference type="Proteomes" id="UP000000599">
    <property type="component" value="Chromosome G"/>
</dbReference>
<dbReference type="GO" id="GO:0097361">
    <property type="term" value="C:cytosolic [4Fe-4S] assembly targeting complex"/>
    <property type="evidence" value="ECO:0007669"/>
    <property type="project" value="EnsemblFungi"/>
</dbReference>
<dbReference type="GO" id="GO:0005634">
    <property type="term" value="C:nucleus"/>
    <property type="evidence" value="ECO:0007669"/>
    <property type="project" value="UniProtKB-SubCell"/>
</dbReference>
<dbReference type="GO" id="GO:0016226">
    <property type="term" value="P:iron-sulfur cluster assembly"/>
    <property type="evidence" value="ECO:0007669"/>
    <property type="project" value="UniProtKB-UniRule"/>
</dbReference>
<dbReference type="GO" id="GO:0002098">
    <property type="term" value="P:tRNA wobble uridine modification"/>
    <property type="evidence" value="ECO:0007669"/>
    <property type="project" value="EnsemblFungi"/>
</dbReference>
<dbReference type="CDD" id="cd00200">
    <property type="entry name" value="WD40"/>
    <property type="match status" value="1"/>
</dbReference>
<dbReference type="Gene3D" id="2.130.10.10">
    <property type="entry name" value="YVTN repeat-like/Quinoprotein amine dehydrogenase"/>
    <property type="match status" value="1"/>
</dbReference>
<dbReference type="HAMAP" id="MF_03037">
    <property type="entry name" value="ciao1"/>
    <property type="match status" value="1"/>
</dbReference>
<dbReference type="InterPro" id="IPR028608">
    <property type="entry name" value="CIAO1/Cia1"/>
</dbReference>
<dbReference type="InterPro" id="IPR020472">
    <property type="entry name" value="G-protein_beta_WD-40_rep"/>
</dbReference>
<dbReference type="InterPro" id="IPR015943">
    <property type="entry name" value="WD40/YVTN_repeat-like_dom_sf"/>
</dbReference>
<dbReference type="InterPro" id="IPR036322">
    <property type="entry name" value="WD40_repeat_dom_sf"/>
</dbReference>
<dbReference type="InterPro" id="IPR001680">
    <property type="entry name" value="WD40_rpt"/>
</dbReference>
<dbReference type="PANTHER" id="PTHR19920:SF0">
    <property type="entry name" value="CYTOSOLIC IRON-SULFUR PROTEIN ASSEMBLY PROTEIN CIAO1-RELATED"/>
    <property type="match status" value="1"/>
</dbReference>
<dbReference type="PANTHER" id="PTHR19920">
    <property type="entry name" value="WD40 PROTEIN CIAO1"/>
    <property type="match status" value="1"/>
</dbReference>
<dbReference type="Pfam" id="PF00400">
    <property type="entry name" value="WD40"/>
    <property type="match status" value="6"/>
</dbReference>
<dbReference type="PRINTS" id="PR00320">
    <property type="entry name" value="GPROTEINBRPT"/>
</dbReference>
<dbReference type="SMART" id="SM00320">
    <property type="entry name" value="WD40"/>
    <property type="match status" value="7"/>
</dbReference>
<dbReference type="SUPFAM" id="SSF50978">
    <property type="entry name" value="WD40 repeat-like"/>
    <property type="match status" value="1"/>
</dbReference>
<dbReference type="PROSITE" id="PS00678">
    <property type="entry name" value="WD_REPEATS_1"/>
    <property type="match status" value="1"/>
</dbReference>
<dbReference type="PROSITE" id="PS50082">
    <property type="entry name" value="WD_REPEATS_2"/>
    <property type="match status" value="3"/>
</dbReference>
<dbReference type="PROSITE" id="PS50294">
    <property type="entry name" value="WD_REPEATS_REGION"/>
    <property type="match status" value="2"/>
</dbReference>
<evidence type="ECO:0000255" key="1">
    <source>
        <dbReference type="HAMAP-Rule" id="MF_03037"/>
    </source>
</evidence>
<feature type="chain" id="PRO_0000382514" description="Probable cytosolic iron-sulfur protein assembly protein 1">
    <location>
        <begin position="1"/>
        <end position="394"/>
    </location>
</feature>
<feature type="repeat" description="WD 1">
    <location>
        <begin position="10"/>
        <end position="49"/>
    </location>
</feature>
<feature type="repeat" description="WD 2">
    <location>
        <begin position="56"/>
        <end position="108"/>
    </location>
</feature>
<feature type="repeat" description="WD 3">
    <location>
        <begin position="144"/>
        <end position="184"/>
    </location>
</feature>
<feature type="repeat" description="WD 4">
    <location>
        <begin position="191"/>
        <end position="230"/>
    </location>
</feature>
<feature type="repeat" description="WD 5">
    <location>
        <begin position="237"/>
        <end position="284"/>
    </location>
</feature>
<feature type="repeat" description="WD 6">
    <location>
        <begin position="313"/>
        <end position="352"/>
    </location>
</feature>
<feature type="repeat" description="WD 7">
    <location>
        <begin position="359"/>
        <end position="394"/>
    </location>
</feature>
<gene>
    <name evidence="1" type="primary">CIA1</name>
    <name type="ordered locus">DEHA2G08140g</name>
</gene>
<keyword id="KW-0963">Cytoplasm</keyword>
<keyword id="KW-0539">Nucleus</keyword>
<keyword id="KW-1185">Reference proteome</keyword>
<keyword id="KW-0677">Repeat</keyword>
<keyword id="KW-0853">WD repeat</keyword>
<organism>
    <name type="scientific">Debaryomyces hansenii (strain ATCC 36239 / CBS 767 / BCRC 21394 / JCM 1990 / NBRC 0083 / IGC 2968)</name>
    <name type="common">Yeast</name>
    <name type="synonym">Torulaspora hansenii</name>
    <dbReference type="NCBI Taxonomy" id="284592"/>
    <lineage>
        <taxon>Eukaryota</taxon>
        <taxon>Fungi</taxon>
        <taxon>Dikarya</taxon>
        <taxon>Ascomycota</taxon>
        <taxon>Saccharomycotina</taxon>
        <taxon>Pichiomycetes</taxon>
        <taxon>Debaryomycetaceae</taxon>
        <taxon>Debaryomyces</taxon>
    </lineage>
</organism>
<comment type="function">
    <text evidence="1">Essential component of the cytosolic iron-sulfur (Fe/S) protein assembly machinery. Required for the maturation of extramitochondrial Fe/S proteins.</text>
</comment>
<comment type="subunit">
    <text evidence="1">Interacts with NAR1.</text>
</comment>
<comment type="subcellular location">
    <subcellularLocation>
        <location evidence="1">Cytoplasm</location>
    </subcellularLocation>
    <subcellularLocation>
        <location evidence="1">Nucleus</location>
    </subcellularLocation>
    <text evidence="1">Preferentially localized to the nucleus.</text>
</comment>
<comment type="similarity">
    <text evidence="1">Belongs to the WD repeat CIA1 family.</text>
</comment>
<proteinExistence type="inferred from homology"/>
<name>CIAO1_DEBHA</name>
<protein>
    <recommendedName>
        <fullName evidence="1">Probable cytosolic iron-sulfur protein assembly protein 1</fullName>
    </recommendedName>
</protein>
<sequence>MVKLIKSIKAHNDKAWCAKSHPTLPLLATASTDRTSHIYNLSAKKNFPLLAKLEEAHKRSVRSVDFKPPLGGVESPVDDFLDLPALATGSFDSTISIWGIDEPEEQDSMDDGDDDDDDEKINDKHAQLLTSINNEWNLMAIIEGHENEVKSVAWNYQGNLLASCSRDKTIWIWETDPETLEEFECISVLSDHQHDVKHITWHPSQNLLASSSYDDTIKLYKQDEDDDDWSCVGILNGHGGTVWCSSFENPTSPTFDANKIRLVSASDDLSVRIWSSIVEQTEQIEDTTDRLPSSIKSTNNEMVWEEEAILPAIHKYAVYSVSWSAKTGKISSTGSDGKLVIYRETESKKWEIESVYESAHGVYEINSVSWCTLDDKTEVLVTAGDDGAINIWEP</sequence>
<reference key="1">
    <citation type="journal article" date="2004" name="Nature">
        <title>Genome evolution in yeasts.</title>
        <authorList>
            <person name="Dujon B."/>
            <person name="Sherman D."/>
            <person name="Fischer G."/>
            <person name="Durrens P."/>
            <person name="Casaregola S."/>
            <person name="Lafontaine I."/>
            <person name="de Montigny J."/>
            <person name="Marck C."/>
            <person name="Neuveglise C."/>
            <person name="Talla E."/>
            <person name="Goffard N."/>
            <person name="Frangeul L."/>
            <person name="Aigle M."/>
            <person name="Anthouard V."/>
            <person name="Babour A."/>
            <person name="Barbe V."/>
            <person name="Barnay S."/>
            <person name="Blanchin S."/>
            <person name="Beckerich J.-M."/>
            <person name="Beyne E."/>
            <person name="Bleykasten C."/>
            <person name="Boisrame A."/>
            <person name="Boyer J."/>
            <person name="Cattolico L."/>
            <person name="Confanioleri F."/>
            <person name="de Daruvar A."/>
            <person name="Despons L."/>
            <person name="Fabre E."/>
            <person name="Fairhead C."/>
            <person name="Ferry-Dumazet H."/>
            <person name="Groppi A."/>
            <person name="Hantraye F."/>
            <person name="Hennequin C."/>
            <person name="Jauniaux N."/>
            <person name="Joyet P."/>
            <person name="Kachouri R."/>
            <person name="Kerrest A."/>
            <person name="Koszul R."/>
            <person name="Lemaire M."/>
            <person name="Lesur I."/>
            <person name="Ma L."/>
            <person name="Muller H."/>
            <person name="Nicaud J.-M."/>
            <person name="Nikolski M."/>
            <person name="Oztas S."/>
            <person name="Ozier-Kalogeropoulos O."/>
            <person name="Pellenz S."/>
            <person name="Potier S."/>
            <person name="Richard G.-F."/>
            <person name="Straub M.-L."/>
            <person name="Suleau A."/>
            <person name="Swennen D."/>
            <person name="Tekaia F."/>
            <person name="Wesolowski-Louvel M."/>
            <person name="Westhof E."/>
            <person name="Wirth B."/>
            <person name="Zeniou-Meyer M."/>
            <person name="Zivanovic Y."/>
            <person name="Bolotin-Fukuhara M."/>
            <person name="Thierry A."/>
            <person name="Bouchier C."/>
            <person name="Caudron B."/>
            <person name="Scarpelli C."/>
            <person name="Gaillardin C."/>
            <person name="Weissenbach J."/>
            <person name="Wincker P."/>
            <person name="Souciet J.-L."/>
        </authorList>
    </citation>
    <scope>NUCLEOTIDE SEQUENCE [LARGE SCALE GENOMIC DNA]</scope>
    <source>
        <strain>ATCC 36239 / CBS 767 / BCRC 21394 / JCM 1990 / NBRC 0083 / IGC 2968</strain>
    </source>
</reference>